<keyword id="KW-0238">DNA-binding</keyword>
<keyword id="KW-0614">Plasmid</keyword>
<keyword id="KW-0804">Transcription</keyword>
<keyword id="KW-0805">Transcription regulation</keyword>
<accession>P13965</accession>
<feature type="chain" id="PRO_0000068368" description="Protein KleB">
    <location>
        <begin position="1"/>
        <end position="71"/>
    </location>
</feature>
<feature type="DNA-binding region" description="H-T-H motif" evidence="1">
    <location>
        <begin position="9"/>
        <end position="28"/>
    </location>
</feature>
<protein>
    <recommendedName>
        <fullName>Protein KleB</fullName>
    </recommendedName>
    <alternativeName>
        <fullName>KcrA2 protein</fullName>
    </alternativeName>
</protein>
<sequence>MPNRKIEIVTTNCRRCGKSISTLSRSLIGADALREELGGICGDCITPEERQRIEQGTLLAALRQCAAAGTS</sequence>
<evidence type="ECO:0000250" key="1"/>
<dbReference type="EMBL" id="X07248">
    <property type="protein sequence ID" value="CAA30234.1"/>
    <property type="molecule type" value="Genomic_DNA"/>
</dbReference>
<dbReference type="EMBL" id="L18919">
    <property type="protein sequence ID" value="AAA92766.1"/>
    <property type="molecule type" value="Genomic_DNA"/>
</dbReference>
<dbReference type="RefSeq" id="WP_011205838.1">
    <property type="nucleotide sequence ID" value="NZ_VMTS01000048.1"/>
</dbReference>
<dbReference type="GO" id="GO:0003677">
    <property type="term" value="F:DNA binding"/>
    <property type="evidence" value="ECO:0007669"/>
    <property type="project" value="UniProtKB-KW"/>
</dbReference>
<dbReference type="InterPro" id="IPR024392">
    <property type="entry name" value="DUF2688"/>
</dbReference>
<dbReference type="Pfam" id="PF10892">
    <property type="entry name" value="DUF2688"/>
    <property type="match status" value="1"/>
</dbReference>
<organism>
    <name type="scientific">Escherichia coli</name>
    <dbReference type="NCBI Taxonomy" id="562"/>
    <lineage>
        <taxon>Bacteria</taxon>
        <taxon>Pseudomonadati</taxon>
        <taxon>Pseudomonadota</taxon>
        <taxon>Gammaproteobacteria</taxon>
        <taxon>Enterobacterales</taxon>
        <taxon>Enterobacteriaceae</taxon>
        <taxon>Escherichia</taxon>
    </lineage>
</organism>
<geneLocation type="plasmid">
    <name>IncP-alpha RK2</name>
</geneLocation>
<reference key="1">
    <citation type="journal article" date="1988" name="Nucleic Acids Res.">
        <title>Gene regulation on broad host range plasmid RK2: identification of three novel operons whose transcription is repressed by both KorA and KorC.</title>
        <authorList>
            <person name="Thomas C.M."/>
            <person name="Ibbotson J.P."/>
            <person name="Wang N."/>
            <person name="Smith C.A."/>
            <person name="Tipping R."/>
            <person name="Loader N.M."/>
        </authorList>
    </citation>
    <scope>NUCLEOTIDE SEQUENCE [GENOMIC DNA]</scope>
</reference>
<reference key="2">
    <citation type="journal article" date="1993" name="J. Bacteriol.">
        <title>kil-kor regulon of promiscuous plasmid RK2: structure, products, and regulation of two operons that constitute the kilE locus.</title>
        <authorList>
            <person name="Kornacki J.A."/>
            <person name="Chang C.-H."/>
            <person name="Figurski D.H."/>
        </authorList>
    </citation>
    <scope>NUCLEOTIDE SEQUENCE [GENOMIC DNA]</scope>
</reference>
<proteinExistence type="predicted"/>
<name>KLEB2_ECOLX</name>
<gene>
    <name type="primary">kleB</name>
    <name type="synonym">kcrA2</name>
</gene>